<dbReference type="EMBL" id="CU329672">
    <property type="protein sequence ID" value="CAA20856.1"/>
    <property type="molecule type" value="Genomic_DNA"/>
</dbReference>
<dbReference type="PIR" id="T41263">
    <property type="entry name" value="T41263"/>
</dbReference>
<dbReference type="RefSeq" id="NP_588345.1">
    <property type="nucleotide sequence ID" value="NM_001023336.2"/>
</dbReference>
<dbReference type="SMR" id="O74503"/>
<dbReference type="BioGRID" id="275877">
    <property type="interactions" value="69"/>
</dbReference>
<dbReference type="FunCoup" id="O74503">
    <property type="interactions" value="229"/>
</dbReference>
<dbReference type="STRING" id="284812.O74503"/>
<dbReference type="iPTMnet" id="O74503"/>
<dbReference type="PaxDb" id="4896-SPCC285.17.1"/>
<dbReference type="EnsemblFungi" id="SPCC285.17.1">
    <property type="protein sequence ID" value="SPCC285.17.1:pep"/>
    <property type="gene ID" value="SPCC285.17"/>
</dbReference>
<dbReference type="GeneID" id="2539310"/>
<dbReference type="KEGG" id="spo:2539310"/>
<dbReference type="PomBase" id="SPCC285.17">
    <property type="gene designation" value="spp27"/>
</dbReference>
<dbReference type="VEuPathDB" id="FungiDB:SPCC285.17"/>
<dbReference type="eggNOG" id="KOG1946">
    <property type="taxonomic scope" value="Eukaryota"/>
</dbReference>
<dbReference type="HOGENOM" id="CLU_046065_1_1_1"/>
<dbReference type="InParanoid" id="O74503"/>
<dbReference type="OMA" id="DKRTILC"/>
<dbReference type="PhylomeDB" id="O74503"/>
<dbReference type="PRO" id="PR:O74503"/>
<dbReference type="Proteomes" id="UP000002485">
    <property type="component" value="Chromosome III"/>
</dbReference>
<dbReference type="GO" id="GO:0005829">
    <property type="term" value="C:cytosol"/>
    <property type="evidence" value="ECO:0007005"/>
    <property type="project" value="PomBase"/>
</dbReference>
<dbReference type="GO" id="GO:0005634">
    <property type="term" value="C:nucleus"/>
    <property type="evidence" value="ECO:0007005"/>
    <property type="project" value="PomBase"/>
</dbReference>
<dbReference type="GO" id="GO:0000500">
    <property type="term" value="C:RNA polymerase I upstream activating factor complex"/>
    <property type="evidence" value="ECO:0000269"/>
    <property type="project" value="PomBase"/>
</dbReference>
<dbReference type="GO" id="GO:0001165">
    <property type="term" value="F:RNA polymerase I cis-regulatory region sequence-specific DNA binding"/>
    <property type="evidence" value="ECO:0000318"/>
    <property type="project" value="GO_Central"/>
</dbReference>
<dbReference type="GO" id="GO:0001181">
    <property type="term" value="F:RNA polymerase I general transcription initiation factor activity"/>
    <property type="evidence" value="ECO:0000305"/>
    <property type="project" value="PomBase"/>
</dbReference>
<dbReference type="GO" id="GO:0042790">
    <property type="term" value="P:nucleolar large rRNA transcription by RNA polymerase I"/>
    <property type="evidence" value="ECO:0000318"/>
    <property type="project" value="GO_Central"/>
</dbReference>
<dbReference type="GO" id="GO:0006361">
    <property type="term" value="P:transcription initiation at RNA polymerase I promoter"/>
    <property type="evidence" value="ECO:0000269"/>
    <property type="project" value="PomBase"/>
</dbReference>
<dbReference type="CDD" id="cd10567">
    <property type="entry name" value="SWIB-MDM2_like"/>
    <property type="match status" value="1"/>
</dbReference>
<dbReference type="FunFam" id="1.10.245.10:FF:000004">
    <property type="entry name" value="Upstream activation factor subunit"/>
    <property type="match status" value="1"/>
</dbReference>
<dbReference type="Gene3D" id="1.10.10.60">
    <property type="entry name" value="Homeodomain-like"/>
    <property type="match status" value="1"/>
</dbReference>
<dbReference type="Gene3D" id="1.10.245.10">
    <property type="entry name" value="SWIB/MDM2 domain"/>
    <property type="match status" value="1"/>
</dbReference>
<dbReference type="InterPro" id="IPR014876">
    <property type="entry name" value="DEK_C"/>
</dbReference>
<dbReference type="InterPro" id="IPR019835">
    <property type="entry name" value="SWIB_domain"/>
</dbReference>
<dbReference type="InterPro" id="IPR036885">
    <property type="entry name" value="SWIB_MDM2_dom_sf"/>
</dbReference>
<dbReference type="InterPro" id="IPR003121">
    <property type="entry name" value="SWIB_MDM2_domain"/>
</dbReference>
<dbReference type="PANTHER" id="PTHR13844">
    <property type="entry name" value="SWI/SNF-RELATED MATRIX-ASSOCIATED ACTIN-DEPENDENT REGULATOR OF CHROMATIN SUBFAMILY D"/>
    <property type="match status" value="1"/>
</dbReference>
<dbReference type="Pfam" id="PF08766">
    <property type="entry name" value="DEK_C"/>
    <property type="match status" value="1"/>
</dbReference>
<dbReference type="Pfam" id="PF02201">
    <property type="entry name" value="SWIB"/>
    <property type="match status" value="1"/>
</dbReference>
<dbReference type="SMART" id="SM00151">
    <property type="entry name" value="SWIB"/>
    <property type="match status" value="1"/>
</dbReference>
<dbReference type="SUPFAM" id="SSF109715">
    <property type="entry name" value="DEK C-terminal domain"/>
    <property type="match status" value="1"/>
</dbReference>
<dbReference type="SUPFAM" id="SSF47592">
    <property type="entry name" value="SWIB/MDM2 domain"/>
    <property type="match status" value="1"/>
</dbReference>
<dbReference type="PROSITE" id="PS51998">
    <property type="entry name" value="DEK_C"/>
    <property type="match status" value="1"/>
</dbReference>
<dbReference type="PROSITE" id="PS51925">
    <property type="entry name" value="SWIB_MDM2"/>
    <property type="match status" value="1"/>
</dbReference>
<name>UAF30_SCHPO</name>
<gene>
    <name type="primary">spp27</name>
    <name type="synonym">uaf30</name>
    <name type="ORF">SPCC285.17</name>
</gene>
<accession>O74503</accession>
<keyword id="KW-0963">Cytoplasm</keyword>
<keyword id="KW-0539">Nucleus</keyword>
<keyword id="KW-1185">Reference proteome</keyword>
<keyword id="KW-0804">Transcription</keyword>
<keyword id="KW-0805">Transcription regulation</keyword>
<reference key="1">
    <citation type="journal article" date="2002" name="Nature">
        <title>The genome sequence of Schizosaccharomyces pombe.</title>
        <authorList>
            <person name="Wood V."/>
            <person name="Gwilliam R."/>
            <person name="Rajandream M.A."/>
            <person name="Lyne M.H."/>
            <person name="Lyne R."/>
            <person name="Stewart A."/>
            <person name="Sgouros J.G."/>
            <person name="Peat N."/>
            <person name="Hayles J."/>
            <person name="Baker S.G."/>
            <person name="Basham D."/>
            <person name="Bowman S."/>
            <person name="Brooks K."/>
            <person name="Brown D."/>
            <person name="Brown S."/>
            <person name="Chillingworth T."/>
            <person name="Churcher C.M."/>
            <person name="Collins M."/>
            <person name="Connor R."/>
            <person name="Cronin A."/>
            <person name="Davis P."/>
            <person name="Feltwell T."/>
            <person name="Fraser A."/>
            <person name="Gentles S."/>
            <person name="Goble A."/>
            <person name="Hamlin N."/>
            <person name="Harris D.E."/>
            <person name="Hidalgo J."/>
            <person name="Hodgson G."/>
            <person name="Holroyd S."/>
            <person name="Hornsby T."/>
            <person name="Howarth S."/>
            <person name="Huckle E.J."/>
            <person name="Hunt S."/>
            <person name="Jagels K."/>
            <person name="James K.D."/>
            <person name="Jones L."/>
            <person name="Jones M."/>
            <person name="Leather S."/>
            <person name="McDonald S."/>
            <person name="McLean J."/>
            <person name="Mooney P."/>
            <person name="Moule S."/>
            <person name="Mungall K.L."/>
            <person name="Murphy L.D."/>
            <person name="Niblett D."/>
            <person name="Odell C."/>
            <person name="Oliver K."/>
            <person name="O'Neil S."/>
            <person name="Pearson D."/>
            <person name="Quail M.A."/>
            <person name="Rabbinowitsch E."/>
            <person name="Rutherford K.M."/>
            <person name="Rutter S."/>
            <person name="Saunders D."/>
            <person name="Seeger K."/>
            <person name="Sharp S."/>
            <person name="Skelton J."/>
            <person name="Simmonds M.N."/>
            <person name="Squares R."/>
            <person name="Squares S."/>
            <person name="Stevens K."/>
            <person name="Taylor K."/>
            <person name="Taylor R.G."/>
            <person name="Tivey A."/>
            <person name="Walsh S.V."/>
            <person name="Warren T."/>
            <person name="Whitehead S."/>
            <person name="Woodward J.R."/>
            <person name="Volckaert G."/>
            <person name="Aert R."/>
            <person name="Robben J."/>
            <person name="Grymonprez B."/>
            <person name="Weltjens I."/>
            <person name="Vanstreels E."/>
            <person name="Rieger M."/>
            <person name="Schaefer M."/>
            <person name="Mueller-Auer S."/>
            <person name="Gabel C."/>
            <person name="Fuchs M."/>
            <person name="Duesterhoeft A."/>
            <person name="Fritzc C."/>
            <person name="Holzer E."/>
            <person name="Moestl D."/>
            <person name="Hilbert H."/>
            <person name="Borzym K."/>
            <person name="Langer I."/>
            <person name="Beck A."/>
            <person name="Lehrach H."/>
            <person name="Reinhardt R."/>
            <person name="Pohl T.M."/>
            <person name="Eger P."/>
            <person name="Zimmermann W."/>
            <person name="Wedler H."/>
            <person name="Wambutt R."/>
            <person name="Purnelle B."/>
            <person name="Goffeau A."/>
            <person name="Cadieu E."/>
            <person name="Dreano S."/>
            <person name="Gloux S."/>
            <person name="Lelaure V."/>
            <person name="Mottier S."/>
            <person name="Galibert F."/>
            <person name="Aves S.J."/>
            <person name="Xiang Z."/>
            <person name="Hunt C."/>
            <person name="Moore K."/>
            <person name="Hurst S.M."/>
            <person name="Lucas M."/>
            <person name="Rochet M."/>
            <person name="Gaillardin C."/>
            <person name="Tallada V.A."/>
            <person name="Garzon A."/>
            <person name="Thode G."/>
            <person name="Daga R.R."/>
            <person name="Cruzado L."/>
            <person name="Jimenez J."/>
            <person name="Sanchez M."/>
            <person name="del Rey F."/>
            <person name="Benito J."/>
            <person name="Dominguez A."/>
            <person name="Revuelta J.L."/>
            <person name="Moreno S."/>
            <person name="Armstrong J."/>
            <person name="Forsburg S.L."/>
            <person name="Cerutti L."/>
            <person name="Lowe T."/>
            <person name="McCombie W.R."/>
            <person name="Paulsen I."/>
            <person name="Potashkin J."/>
            <person name="Shpakovski G.V."/>
            <person name="Ussery D."/>
            <person name="Barrell B.G."/>
            <person name="Nurse P."/>
        </authorList>
    </citation>
    <scope>NUCLEOTIDE SEQUENCE [LARGE SCALE GENOMIC DNA]</scope>
    <source>
        <strain>972 / ATCC 24843</strain>
    </source>
</reference>
<reference key="2">
    <citation type="journal article" date="2002" name="Nucleic Acids Res.">
        <title>Characterization of the fission yeast ribosomal DNA binding factor: components share homology with upstream activating factor and with SWI/SNF subunits.</title>
        <authorList>
            <person name="Liu M."/>
            <person name="Guo A."/>
            <person name="Boukhgalter B."/>
            <person name="Van Den Heuvel K."/>
            <person name="Tripp M."/>
            <person name="Pape L."/>
        </authorList>
    </citation>
    <scope>FUNCTION</scope>
    <scope>IDENTIFICATION IN THE UAF COMPLEX</scope>
    <scope>INTERACTION WITH RRN10</scope>
</reference>
<reference key="3">
    <citation type="journal article" date="2006" name="Nat. Biotechnol.">
        <title>ORFeome cloning and global analysis of protein localization in the fission yeast Schizosaccharomyces pombe.</title>
        <authorList>
            <person name="Matsuyama A."/>
            <person name="Arai R."/>
            <person name="Yashiroda Y."/>
            <person name="Shirai A."/>
            <person name="Kamata A."/>
            <person name="Sekido S."/>
            <person name="Kobayashi Y."/>
            <person name="Hashimoto A."/>
            <person name="Hamamoto M."/>
            <person name="Hiraoka Y."/>
            <person name="Horinouchi S."/>
            <person name="Yoshida M."/>
        </authorList>
    </citation>
    <scope>SUBCELLULAR LOCATION [LARGE SCALE ANALYSIS]</scope>
</reference>
<feature type="chain" id="PRO_0000290654" description="Upstream activation factor subunit spp27">
    <location>
        <begin position="1"/>
        <end position="233"/>
    </location>
</feature>
<feature type="domain" description="DEK-C" evidence="2">
    <location>
        <begin position="1"/>
        <end position="53"/>
    </location>
</feature>
<feature type="domain" description="SWIB/MDM2" evidence="1">
    <location>
        <begin position="116"/>
        <end position="193"/>
    </location>
</feature>
<feature type="region of interest" description="Disordered" evidence="3">
    <location>
        <begin position="55"/>
        <end position="122"/>
    </location>
</feature>
<feature type="region of interest" description="Disordered" evidence="3">
    <location>
        <begin position="194"/>
        <end position="233"/>
    </location>
</feature>
<feature type="compositionally biased region" description="Basic and acidic residues" evidence="3">
    <location>
        <begin position="194"/>
        <end position="208"/>
    </location>
</feature>
<evidence type="ECO:0000255" key="1">
    <source>
        <dbReference type="PROSITE-ProRule" id="PRU01273"/>
    </source>
</evidence>
<evidence type="ECO:0000255" key="2">
    <source>
        <dbReference type="PROSITE-ProRule" id="PRU01342"/>
    </source>
</evidence>
<evidence type="ECO:0000256" key="3">
    <source>
        <dbReference type="SAM" id="MobiDB-lite"/>
    </source>
</evidence>
<evidence type="ECO:0000269" key="4">
    <source>
    </source>
</evidence>
<evidence type="ECO:0000269" key="5">
    <source>
    </source>
</evidence>
<comment type="function">
    <text evidence="4">Component of the UAF (upstream activation factor) complex which interacts with the upstream element of the RNA polymerase I promoter and forms a stable preinitiation complex. UAF seems to stimulate basal transcription to a fully activated level.</text>
</comment>
<comment type="subunit">
    <text evidence="4">Component of the UAF (upstream activation factor) complex which consists of spp27/uaf30, rrn5, rrn10, and histones H3 and H4. Interacts with rrn10.</text>
</comment>
<comment type="subcellular location">
    <subcellularLocation>
        <location evidence="5">Cytoplasm</location>
    </subcellularLocation>
    <subcellularLocation>
        <location evidence="5">Nucleus</location>
    </subcellularLocation>
</comment>
<protein>
    <recommendedName>
        <fullName>Upstream activation factor subunit spp27</fullName>
    </recommendedName>
    <alternativeName>
        <fullName>Upstream activation factor 27 KDa subunit</fullName>
        <shortName>p27</shortName>
    </alternativeName>
    <alternativeName>
        <fullName>Upstream activation factor 30 KDa subunit</fullName>
        <shortName>p30</shortName>
    </alternativeName>
    <alternativeName>
        <fullName>Upstream activation factor subunit uaf30</fullName>
    </alternativeName>
</protein>
<sequence>MEEYETDIKQILGTVDRQTVSAKQVRQLLEERRKVDLSAHKKDLNALILKCFDETAAPSEKESLEKQAPARKTKGKRATENGTEEGKKPAKRTRKRKEDGEEGGKRKRNQDPANNPLNKPMKLSPKLAEFLGLEQLSRPQTVKKLWEYIKAHDLQDPNDKRTILCDDKLKSVFEVDTLHMFTMNKYLTNLMTKIPDDQLPKPQPKNEEPAAPNDLPKQEEKELVEPPTAESTA</sequence>
<proteinExistence type="evidence at protein level"/>
<organism>
    <name type="scientific">Schizosaccharomyces pombe (strain 972 / ATCC 24843)</name>
    <name type="common">Fission yeast</name>
    <dbReference type="NCBI Taxonomy" id="284812"/>
    <lineage>
        <taxon>Eukaryota</taxon>
        <taxon>Fungi</taxon>
        <taxon>Dikarya</taxon>
        <taxon>Ascomycota</taxon>
        <taxon>Taphrinomycotina</taxon>
        <taxon>Schizosaccharomycetes</taxon>
        <taxon>Schizosaccharomycetales</taxon>
        <taxon>Schizosaccharomycetaceae</taxon>
        <taxon>Schizosaccharomyces</taxon>
    </lineage>
</organism>